<reference key="1">
    <citation type="journal article" date="2001" name="DNA Res.">
        <title>Complete genome sequence of an aerobic thermoacidophilic Crenarchaeon, Sulfolobus tokodaii strain7.</title>
        <authorList>
            <person name="Kawarabayasi Y."/>
            <person name="Hino Y."/>
            <person name="Horikawa H."/>
            <person name="Jin-no K."/>
            <person name="Takahashi M."/>
            <person name="Sekine M."/>
            <person name="Baba S."/>
            <person name="Ankai A."/>
            <person name="Kosugi H."/>
            <person name="Hosoyama A."/>
            <person name="Fukui S."/>
            <person name="Nagai Y."/>
            <person name="Nishijima K."/>
            <person name="Otsuka R."/>
            <person name="Nakazawa H."/>
            <person name="Takamiya M."/>
            <person name="Kato Y."/>
            <person name="Yoshizawa T."/>
            <person name="Tanaka T."/>
            <person name="Kudoh Y."/>
            <person name="Yamazaki J."/>
            <person name="Kushida N."/>
            <person name="Oguchi A."/>
            <person name="Aoki K."/>
            <person name="Masuda S."/>
            <person name="Yanagii M."/>
            <person name="Nishimura M."/>
            <person name="Yamagishi A."/>
            <person name="Oshima T."/>
            <person name="Kikuchi H."/>
        </authorList>
    </citation>
    <scope>NUCLEOTIDE SEQUENCE [LARGE SCALE GENOMIC DNA]</scope>
    <source>
        <strain>DSM 16993 / JCM 10545 / NBRC 100140 / 7</strain>
    </source>
</reference>
<feature type="chain" id="PRO_0000147694" description="tRNA (guanine(26)-N(2))-dimethyltransferase">
    <location>
        <begin position="1"/>
        <end position="374"/>
    </location>
</feature>
<feature type="domain" description="Trm1 methyltransferase" evidence="1">
    <location>
        <begin position="4"/>
        <end position="371"/>
    </location>
</feature>
<feature type="binding site" evidence="1">
    <location>
        <position position="44"/>
    </location>
    <ligand>
        <name>S-adenosyl-L-methionine</name>
        <dbReference type="ChEBI" id="CHEBI:59789"/>
    </ligand>
</feature>
<feature type="binding site" evidence="1">
    <location>
        <position position="69"/>
    </location>
    <ligand>
        <name>S-adenosyl-L-methionine</name>
        <dbReference type="ChEBI" id="CHEBI:59789"/>
    </ligand>
</feature>
<feature type="binding site" evidence="1">
    <location>
        <position position="87"/>
    </location>
    <ligand>
        <name>S-adenosyl-L-methionine</name>
        <dbReference type="ChEBI" id="CHEBI:59789"/>
    </ligand>
</feature>
<feature type="binding site" evidence="1">
    <location>
        <position position="113"/>
    </location>
    <ligand>
        <name>S-adenosyl-L-methionine</name>
        <dbReference type="ChEBI" id="CHEBI:59789"/>
    </ligand>
</feature>
<feature type="binding site" evidence="1">
    <location>
        <position position="114"/>
    </location>
    <ligand>
        <name>S-adenosyl-L-methionine</name>
        <dbReference type="ChEBI" id="CHEBI:59789"/>
    </ligand>
</feature>
<feature type="binding site" evidence="1">
    <location>
        <position position="244"/>
    </location>
    <ligand>
        <name>Zn(2+)</name>
        <dbReference type="ChEBI" id="CHEBI:29105"/>
    </ligand>
</feature>
<feature type="binding site" evidence="1">
    <location>
        <position position="247"/>
    </location>
    <ligand>
        <name>Zn(2+)</name>
        <dbReference type="ChEBI" id="CHEBI:29105"/>
    </ligand>
</feature>
<feature type="binding site" evidence="1">
    <location>
        <position position="261"/>
    </location>
    <ligand>
        <name>Zn(2+)</name>
        <dbReference type="ChEBI" id="CHEBI:29105"/>
    </ligand>
</feature>
<feature type="binding site" evidence="1">
    <location>
        <position position="264"/>
    </location>
    <ligand>
        <name>Zn(2+)</name>
        <dbReference type="ChEBI" id="CHEBI:29105"/>
    </ligand>
</feature>
<organism>
    <name type="scientific">Sulfurisphaera tokodaii (strain DSM 16993 / JCM 10545 / NBRC 100140 / 7)</name>
    <name type="common">Sulfolobus tokodaii</name>
    <dbReference type="NCBI Taxonomy" id="273063"/>
    <lineage>
        <taxon>Archaea</taxon>
        <taxon>Thermoproteota</taxon>
        <taxon>Thermoprotei</taxon>
        <taxon>Sulfolobales</taxon>
        <taxon>Sulfolobaceae</taxon>
        <taxon>Sulfurisphaera</taxon>
    </lineage>
</organism>
<dbReference type="EC" id="2.1.1.216" evidence="1"/>
<dbReference type="EMBL" id="BA000023">
    <property type="protein sequence ID" value="BAK54503.1"/>
    <property type="molecule type" value="Genomic_DNA"/>
</dbReference>
<dbReference type="RefSeq" id="WP_010979289.1">
    <property type="nucleotide sequence ID" value="NC_003106.2"/>
</dbReference>
<dbReference type="SMR" id="Q971V9"/>
<dbReference type="STRING" id="273063.STK_12690"/>
<dbReference type="GeneID" id="1459269"/>
<dbReference type="KEGG" id="sto:STK_12690"/>
<dbReference type="PATRIC" id="fig|273063.9.peg.1427"/>
<dbReference type="eggNOG" id="arCOG01219">
    <property type="taxonomic scope" value="Archaea"/>
</dbReference>
<dbReference type="OrthoDB" id="372177at2157"/>
<dbReference type="Proteomes" id="UP000001015">
    <property type="component" value="Chromosome"/>
</dbReference>
<dbReference type="GO" id="GO:0160104">
    <property type="term" value="F:tRNA (guanine(26)-N2)-dimethyltransferase activity"/>
    <property type="evidence" value="ECO:0007669"/>
    <property type="project" value="UniProtKB-UniRule"/>
</dbReference>
<dbReference type="GO" id="GO:0000049">
    <property type="term" value="F:tRNA binding"/>
    <property type="evidence" value="ECO:0007669"/>
    <property type="project" value="UniProtKB-KW"/>
</dbReference>
<dbReference type="GO" id="GO:0002940">
    <property type="term" value="P:tRNA N2-guanine methylation"/>
    <property type="evidence" value="ECO:0007669"/>
    <property type="project" value="TreeGrafter"/>
</dbReference>
<dbReference type="FunFam" id="3.40.50.150:FF:000272">
    <property type="entry name" value="tRNA (guanine(26)-N(2))-dimethyltransferase"/>
    <property type="match status" value="1"/>
</dbReference>
<dbReference type="Gene3D" id="3.30.56.70">
    <property type="entry name" value="N2,N2-dimethylguanosine tRNA methyltransferase, C-terminal domain"/>
    <property type="match status" value="1"/>
</dbReference>
<dbReference type="Gene3D" id="3.40.50.150">
    <property type="entry name" value="Vaccinia Virus protein VP39"/>
    <property type="match status" value="1"/>
</dbReference>
<dbReference type="HAMAP" id="MF_00290">
    <property type="entry name" value="tRNA_dimethyltr_TRM1"/>
    <property type="match status" value="1"/>
</dbReference>
<dbReference type="InterPro" id="IPR029063">
    <property type="entry name" value="SAM-dependent_MTases_sf"/>
</dbReference>
<dbReference type="InterPro" id="IPR002905">
    <property type="entry name" value="Trm1"/>
</dbReference>
<dbReference type="InterPro" id="IPR022923">
    <property type="entry name" value="TRM1_arc_bac"/>
</dbReference>
<dbReference type="InterPro" id="IPR042296">
    <property type="entry name" value="tRNA_met_Trm1_C"/>
</dbReference>
<dbReference type="NCBIfam" id="NF003331">
    <property type="entry name" value="PRK04338.1-7"/>
    <property type="match status" value="1"/>
</dbReference>
<dbReference type="PANTHER" id="PTHR10631">
    <property type="entry name" value="N 2 ,N 2 -DIMETHYLGUANOSINE TRNA METHYLTRANSFERASE"/>
    <property type="match status" value="1"/>
</dbReference>
<dbReference type="PANTHER" id="PTHR10631:SF3">
    <property type="entry name" value="TRNA (GUANINE(26)-N(2))-DIMETHYLTRANSFERASE"/>
    <property type="match status" value="1"/>
</dbReference>
<dbReference type="Pfam" id="PF02005">
    <property type="entry name" value="TRM"/>
    <property type="match status" value="1"/>
</dbReference>
<dbReference type="SUPFAM" id="SSF53335">
    <property type="entry name" value="S-adenosyl-L-methionine-dependent methyltransferases"/>
    <property type="match status" value="1"/>
</dbReference>
<dbReference type="PROSITE" id="PS51626">
    <property type="entry name" value="SAM_MT_TRM1"/>
    <property type="match status" value="1"/>
</dbReference>
<gene>
    <name evidence="1" type="primary">trm1</name>
    <name type="ordered locus">STK_12690</name>
</gene>
<protein>
    <recommendedName>
        <fullName evidence="1">tRNA (guanine(26)-N(2))-dimethyltransferase</fullName>
        <ecNumber evidence="1">2.1.1.216</ecNumber>
    </recommendedName>
    <alternativeName>
        <fullName evidence="1">tRNA 2,2-dimethylguanosine-26 methyltransferase</fullName>
    </alternativeName>
    <alternativeName>
        <fullName evidence="1">tRNA(guanine-26,N(2)-N(2)) methyltransferase</fullName>
    </alternativeName>
    <alternativeName>
        <fullName evidence="1">tRNA(m(2,2)G26)dimethyltransferase</fullName>
    </alternativeName>
</protein>
<accession>Q971V9</accession>
<accession>F9VNZ5</accession>
<keyword id="KW-0479">Metal-binding</keyword>
<keyword id="KW-0489">Methyltransferase</keyword>
<keyword id="KW-1185">Reference proteome</keyword>
<keyword id="KW-0694">RNA-binding</keyword>
<keyword id="KW-0949">S-adenosyl-L-methionine</keyword>
<keyword id="KW-0808">Transferase</keyword>
<keyword id="KW-0819">tRNA processing</keyword>
<keyword id="KW-0820">tRNA-binding</keyword>
<keyword id="KW-0862">Zinc</keyword>
<comment type="function">
    <text evidence="1">Dimethylates a single guanine residue at position 26 of a number of tRNAs using S-adenosyl-L-methionine as donor of the methyl groups.</text>
</comment>
<comment type="catalytic activity">
    <reaction evidence="1">
        <text>guanosine(26) in tRNA + 2 S-adenosyl-L-methionine = N(2)-dimethylguanosine(26) in tRNA + 2 S-adenosyl-L-homocysteine + 2 H(+)</text>
        <dbReference type="Rhea" id="RHEA:43140"/>
        <dbReference type="Rhea" id="RHEA-COMP:10359"/>
        <dbReference type="Rhea" id="RHEA-COMP:10360"/>
        <dbReference type="ChEBI" id="CHEBI:15378"/>
        <dbReference type="ChEBI" id="CHEBI:57856"/>
        <dbReference type="ChEBI" id="CHEBI:59789"/>
        <dbReference type="ChEBI" id="CHEBI:74269"/>
        <dbReference type="ChEBI" id="CHEBI:74513"/>
        <dbReference type="EC" id="2.1.1.216"/>
    </reaction>
</comment>
<comment type="similarity">
    <text evidence="1">Belongs to the class I-like SAM-binding methyltransferase superfamily. Trm1 family.</text>
</comment>
<proteinExistence type="inferred from homology"/>
<sequence>MNLIEIREGKASLLIPNPKDYEKEGRYDPSWSPVFYNPKMRLNRDISVLALSVIKPKSVVDALSASGVRGIRYYTEIGGIEKLILNDKNPIATELIKKNAEKNYVNARITTKDANSLLYEIKADFVDIDPFGSPAPFILSAINATINKGYVAFTATDLSALECSSKFSARRKYDLICERLSFSKELGIRGLIAKVIREGAIIEKAAYPIFSFYFDYYYRVFFRIENGAKKVDKLLEKQGYYYECSKCGYREVDYYAERKICPRCGIEMRRYGPAWTGELWNREFLLSMKENLKNFTYFDTFMQVNKLLNILVEESKYVSPYFRLDFIASLIKRNIPKREKMLECLKEASITHFDYRGIKTNKEIDEIVNCIKIN</sequence>
<name>TRM1_SULTO</name>
<evidence type="ECO:0000255" key="1">
    <source>
        <dbReference type="HAMAP-Rule" id="MF_00290"/>
    </source>
</evidence>